<proteinExistence type="inferred from homology"/>
<comment type="function">
    <text evidence="1">Cell wall formation. Catalyzes the transfer of a GlcNAc subunit on undecaprenyl-pyrophosphoryl-MurNAc-pentapeptide (lipid intermediate I) to form undecaprenyl-pyrophosphoryl-MurNAc-(pentapeptide)GlcNAc (lipid intermediate II).</text>
</comment>
<comment type="catalytic activity">
    <reaction evidence="1">
        <text>Mur2Ac(oyl-L-Ala-gamma-D-Glu-L-Lys-D-Ala-D-Ala)-di-trans,octa-cis-undecaprenyl diphosphate + UDP-N-acetyl-alpha-D-glucosamine = beta-D-GlcNAc-(1-&gt;4)-Mur2Ac(oyl-L-Ala-gamma-D-Glu-L-Lys-D-Ala-D-Ala)-di-trans,octa-cis-undecaprenyl diphosphate + UDP + H(+)</text>
        <dbReference type="Rhea" id="RHEA:23192"/>
        <dbReference type="ChEBI" id="CHEBI:15378"/>
        <dbReference type="ChEBI" id="CHEBI:57705"/>
        <dbReference type="ChEBI" id="CHEBI:58223"/>
        <dbReference type="ChEBI" id="CHEBI:60032"/>
        <dbReference type="ChEBI" id="CHEBI:60033"/>
        <dbReference type="EC" id="2.4.1.227"/>
    </reaction>
</comment>
<comment type="pathway">
    <text evidence="1">Cell wall biogenesis; peptidoglycan biosynthesis.</text>
</comment>
<comment type="subcellular location">
    <subcellularLocation>
        <location evidence="1">Cell membrane</location>
        <topology evidence="1">Peripheral membrane protein</topology>
        <orientation evidence="1">Cytoplasmic side</orientation>
    </subcellularLocation>
</comment>
<comment type="similarity">
    <text evidence="1">Belongs to the glycosyltransferase 28 family. MurG subfamily.</text>
</comment>
<keyword id="KW-0131">Cell cycle</keyword>
<keyword id="KW-0132">Cell division</keyword>
<keyword id="KW-1003">Cell membrane</keyword>
<keyword id="KW-0133">Cell shape</keyword>
<keyword id="KW-0961">Cell wall biogenesis/degradation</keyword>
<keyword id="KW-0328">Glycosyltransferase</keyword>
<keyword id="KW-0472">Membrane</keyword>
<keyword id="KW-0573">Peptidoglycan synthesis</keyword>
<keyword id="KW-1185">Reference proteome</keyword>
<keyword id="KW-0808">Transferase</keyword>
<feature type="chain" id="PRO_0000109225" description="UDP-N-acetylglucosamine--N-acetylmuramyl-(pentapeptide) pyrophosphoryl-undecaprenol N-acetylglucosamine transferase">
    <location>
        <begin position="1"/>
        <end position="360"/>
    </location>
</feature>
<feature type="binding site" evidence="1">
    <location>
        <position position="198"/>
    </location>
    <ligand>
        <name>UDP-N-acetyl-alpha-D-glucosamine</name>
        <dbReference type="ChEBI" id="CHEBI:57705"/>
    </ligand>
</feature>
<feature type="binding site" evidence="1">
    <location>
        <position position="289"/>
    </location>
    <ligand>
        <name>UDP-N-acetyl-alpha-D-glucosamine</name>
        <dbReference type="ChEBI" id="CHEBI:57705"/>
    </ligand>
</feature>
<protein>
    <recommendedName>
        <fullName evidence="1">UDP-N-acetylglucosamine--N-acetylmuramyl-(pentapeptide) pyrophosphoryl-undecaprenol N-acetylglucosamine transferase</fullName>
        <ecNumber evidence="1">2.4.1.227</ecNumber>
    </recommendedName>
    <alternativeName>
        <fullName evidence="1">Undecaprenyl-PP-MurNAc-pentapeptide-UDPGlcNAc GlcNAc transferase</fullName>
    </alternativeName>
</protein>
<dbReference type="EC" id="2.4.1.227" evidence="1"/>
<dbReference type="EMBL" id="AE004092">
    <property type="protein sequence ID" value="AAK34318.1"/>
    <property type="molecule type" value="Genomic_DNA"/>
</dbReference>
<dbReference type="EMBL" id="CP000017">
    <property type="protein sequence ID" value="AAZ51870.1"/>
    <property type="molecule type" value="Genomic_DNA"/>
</dbReference>
<dbReference type="RefSeq" id="NP_269597.3">
    <property type="nucleotide sequence ID" value="NC_002737.2"/>
</dbReference>
<dbReference type="SMR" id="P65483"/>
<dbReference type="PaxDb" id="1314-HKU360_01295"/>
<dbReference type="KEGG" id="spy:SPy_1524"/>
<dbReference type="KEGG" id="spz:M5005_Spy1252"/>
<dbReference type="PATRIC" id="fig|160490.10.peg.1330"/>
<dbReference type="HOGENOM" id="CLU_037404_0_0_9"/>
<dbReference type="OMA" id="AADMMLC"/>
<dbReference type="UniPathway" id="UPA00219"/>
<dbReference type="Proteomes" id="UP000000750">
    <property type="component" value="Chromosome"/>
</dbReference>
<dbReference type="GO" id="GO:0005886">
    <property type="term" value="C:plasma membrane"/>
    <property type="evidence" value="ECO:0007669"/>
    <property type="project" value="UniProtKB-SubCell"/>
</dbReference>
<dbReference type="GO" id="GO:0050511">
    <property type="term" value="F:undecaprenyldiphospho-muramoylpentapeptide beta-N-acetylglucosaminyltransferase activity"/>
    <property type="evidence" value="ECO:0007669"/>
    <property type="project" value="UniProtKB-UniRule"/>
</dbReference>
<dbReference type="GO" id="GO:0005975">
    <property type="term" value="P:carbohydrate metabolic process"/>
    <property type="evidence" value="ECO:0007669"/>
    <property type="project" value="InterPro"/>
</dbReference>
<dbReference type="GO" id="GO:0051301">
    <property type="term" value="P:cell division"/>
    <property type="evidence" value="ECO:0007669"/>
    <property type="project" value="UniProtKB-KW"/>
</dbReference>
<dbReference type="GO" id="GO:0071555">
    <property type="term" value="P:cell wall organization"/>
    <property type="evidence" value="ECO:0007669"/>
    <property type="project" value="UniProtKB-KW"/>
</dbReference>
<dbReference type="GO" id="GO:0030259">
    <property type="term" value="P:lipid glycosylation"/>
    <property type="evidence" value="ECO:0007669"/>
    <property type="project" value="UniProtKB-UniRule"/>
</dbReference>
<dbReference type="GO" id="GO:0009252">
    <property type="term" value="P:peptidoglycan biosynthetic process"/>
    <property type="evidence" value="ECO:0007669"/>
    <property type="project" value="UniProtKB-UniRule"/>
</dbReference>
<dbReference type="GO" id="GO:0008360">
    <property type="term" value="P:regulation of cell shape"/>
    <property type="evidence" value="ECO:0007669"/>
    <property type="project" value="UniProtKB-KW"/>
</dbReference>
<dbReference type="CDD" id="cd03785">
    <property type="entry name" value="GT28_MurG"/>
    <property type="match status" value="1"/>
</dbReference>
<dbReference type="Gene3D" id="3.40.50.2000">
    <property type="entry name" value="Glycogen Phosphorylase B"/>
    <property type="match status" value="2"/>
</dbReference>
<dbReference type="HAMAP" id="MF_00033">
    <property type="entry name" value="MurG"/>
    <property type="match status" value="1"/>
</dbReference>
<dbReference type="InterPro" id="IPR006009">
    <property type="entry name" value="GlcNAc_MurG"/>
</dbReference>
<dbReference type="InterPro" id="IPR007235">
    <property type="entry name" value="Glyco_trans_28_C"/>
</dbReference>
<dbReference type="InterPro" id="IPR004276">
    <property type="entry name" value="GlycoTrans_28_N"/>
</dbReference>
<dbReference type="PANTHER" id="PTHR21015:SF27">
    <property type="entry name" value="UDP-N-ACETYLGLUCOSAMINE--N-ACETYLMURAMYL-(PENTAPEPTIDE) PYROPHOSPHORYL-UNDECAPRENOL N-ACETYLGLUCOSAMINE TRANSFERASE"/>
    <property type="match status" value="1"/>
</dbReference>
<dbReference type="PANTHER" id="PTHR21015">
    <property type="entry name" value="UDP-N-ACETYLGLUCOSAMINE--N-ACETYLMURAMYL-(PENTAPEPTIDE) PYROPHOSPHORYL-UNDECAPRENOL N-ACETYLGLUCOSAMINE TRANSFERASE 1"/>
    <property type="match status" value="1"/>
</dbReference>
<dbReference type="Pfam" id="PF04101">
    <property type="entry name" value="Glyco_tran_28_C"/>
    <property type="match status" value="1"/>
</dbReference>
<dbReference type="Pfam" id="PF03033">
    <property type="entry name" value="Glyco_transf_28"/>
    <property type="match status" value="1"/>
</dbReference>
<dbReference type="SUPFAM" id="SSF53756">
    <property type="entry name" value="UDP-Glycosyltransferase/glycogen phosphorylase"/>
    <property type="match status" value="1"/>
</dbReference>
<evidence type="ECO:0000255" key="1">
    <source>
        <dbReference type="HAMAP-Rule" id="MF_00033"/>
    </source>
</evidence>
<reference key="1">
    <citation type="journal article" date="2001" name="Proc. Natl. Acad. Sci. U.S.A.">
        <title>Complete genome sequence of an M1 strain of Streptococcus pyogenes.</title>
        <authorList>
            <person name="Ferretti J.J."/>
            <person name="McShan W.M."/>
            <person name="Ajdic D.J."/>
            <person name="Savic D.J."/>
            <person name="Savic G."/>
            <person name="Lyon K."/>
            <person name="Primeaux C."/>
            <person name="Sezate S."/>
            <person name="Suvorov A.N."/>
            <person name="Kenton S."/>
            <person name="Lai H.S."/>
            <person name="Lin S.P."/>
            <person name="Qian Y."/>
            <person name="Jia H.G."/>
            <person name="Najar F.Z."/>
            <person name="Ren Q."/>
            <person name="Zhu H."/>
            <person name="Song L."/>
            <person name="White J."/>
            <person name="Yuan X."/>
            <person name="Clifton S.W."/>
            <person name="Roe B.A."/>
            <person name="McLaughlin R.E."/>
        </authorList>
    </citation>
    <scope>NUCLEOTIDE SEQUENCE [LARGE SCALE GENOMIC DNA]</scope>
    <source>
        <strain>ATCC 700294 / SF370 / Serotype M1</strain>
    </source>
</reference>
<reference key="2">
    <citation type="journal article" date="2005" name="J. Infect. Dis.">
        <title>Evolutionary origin and emergence of a highly successful clone of serotype M1 group A Streptococcus involved multiple horizontal gene transfer events.</title>
        <authorList>
            <person name="Sumby P."/>
            <person name="Porcella S.F."/>
            <person name="Madrigal A.G."/>
            <person name="Barbian K.D."/>
            <person name="Virtaneva K."/>
            <person name="Ricklefs S.M."/>
            <person name="Sturdevant D.E."/>
            <person name="Graham M.R."/>
            <person name="Vuopio-Varkila J."/>
            <person name="Hoe N.P."/>
            <person name="Musser J.M."/>
        </authorList>
    </citation>
    <scope>NUCLEOTIDE SEQUENCE [LARGE SCALE GENOMIC DNA]</scope>
    <source>
        <strain>ATCC BAA-947 / MGAS5005 / Serotype M1</strain>
    </source>
</reference>
<organism>
    <name type="scientific">Streptococcus pyogenes serotype M1</name>
    <dbReference type="NCBI Taxonomy" id="301447"/>
    <lineage>
        <taxon>Bacteria</taxon>
        <taxon>Bacillati</taxon>
        <taxon>Bacillota</taxon>
        <taxon>Bacilli</taxon>
        <taxon>Lactobacillales</taxon>
        <taxon>Streptococcaceae</taxon>
        <taxon>Streptococcus</taxon>
    </lineage>
</organism>
<gene>
    <name evidence="1" type="primary">murG</name>
    <name type="ordered locus">SPy_1524</name>
    <name type="ordered locus">M5005_Spy1252</name>
</gene>
<accession>P65483</accession>
<accession>Q48XQ5</accession>
<accession>Q99YV4</accession>
<name>MURG_STRP1</name>
<sequence length="360" mass="40420">MPKKILFTGGGTVGHVTLNLILIPKFIKDGWEVHYIGDKNGIEHTEIEKSGLDVTFHAIATGKLRRYFSWQNLADVFKVALGLLQSLFIVAKLRPQALFSKGGFVSVPPVVAAKLLGKPVFIHESDRSMGLANKIAYKFATTMYTTFEQEDQLSKVKHLGAVTKVFKDANQMPESTQLEAVKEYFSRDLKTLLFIGGSAGAHVFNQFISDHPELKQRYNIINITGDPHLNELSSHLYRVDYVTDLYQPLMAMADLVVTRGGSNTLFELLAMAKLHLIVPLGKEASRGDQLENATYFEKRGYAKQLQEPDLTLHNFDQAMADLFEHQADYEATMLATKEIQSPDFFYDLLRADISSAIKEK</sequence>